<geneLocation type="plasmid">
    <name>pSymB</name>
    <name>megaplasmid 2</name>
</geneLocation>
<name>HMRR2_RHIME</name>
<gene>
    <name type="primary">hmrR2</name>
    <name type="ordered locus">RB1019</name>
    <name type="ORF">SMb21579</name>
</gene>
<keyword id="KW-0186">Copper</keyword>
<keyword id="KW-0963">Cytoplasm</keyword>
<keyword id="KW-0238">DNA-binding</keyword>
<keyword id="KW-0614">Plasmid</keyword>
<keyword id="KW-1185">Reference proteome</keyword>
<keyword id="KW-0804">Transcription</keyword>
<keyword id="KW-0805">Transcription regulation</keyword>
<comment type="function">
    <text evidence="1">Transcriptional regulator involved in acid tolerance. Binds copper (By similarity).</text>
</comment>
<comment type="subcellular location">
    <subcellularLocation>
        <location evidence="3">Cytoplasm</location>
    </subcellularLocation>
</comment>
<comment type="domain">
    <text evidence="1">It contains a N-terminal DNA binding region and a C-terminal metal binding region.</text>
</comment>
<proteinExistence type="inferred from homology"/>
<organism>
    <name type="scientific">Rhizobium meliloti (strain 1021)</name>
    <name type="common">Ensifer meliloti</name>
    <name type="synonym">Sinorhizobium meliloti</name>
    <dbReference type="NCBI Taxonomy" id="266834"/>
    <lineage>
        <taxon>Bacteria</taxon>
        <taxon>Pseudomonadati</taxon>
        <taxon>Pseudomonadota</taxon>
        <taxon>Alphaproteobacteria</taxon>
        <taxon>Hyphomicrobiales</taxon>
        <taxon>Rhizobiaceae</taxon>
        <taxon>Sinorhizobium/Ensifer group</taxon>
        <taxon>Sinorhizobium</taxon>
    </lineage>
</organism>
<dbReference type="EMBL" id="AL591985">
    <property type="protein sequence ID" value="CAC49419.1"/>
    <property type="molecule type" value="Genomic_DNA"/>
</dbReference>
<dbReference type="PIR" id="C95969">
    <property type="entry name" value="C95969"/>
</dbReference>
<dbReference type="RefSeq" id="NP_437559.1">
    <property type="nucleotide sequence ID" value="NC_003078.1"/>
</dbReference>
<dbReference type="SMR" id="P58379"/>
<dbReference type="EnsemblBacteria" id="CAC49419">
    <property type="protein sequence ID" value="CAC49419"/>
    <property type="gene ID" value="SM_b21579"/>
</dbReference>
<dbReference type="KEGG" id="sme:SM_b21579"/>
<dbReference type="PATRIC" id="fig|266834.11.peg.5946"/>
<dbReference type="eggNOG" id="COG0789">
    <property type="taxonomic scope" value="Bacteria"/>
</dbReference>
<dbReference type="HOGENOM" id="CLU_060077_2_0_5"/>
<dbReference type="OrthoDB" id="9802944at2"/>
<dbReference type="Proteomes" id="UP000001976">
    <property type="component" value="Plasmid pSymB"/>
</dbReference>
<dbReference type="GO" id="GO:0005737">
    <property type="term" value="C:cytoplasm"/>
    <property type="evidence" value="ECO:0007669"/>
    <property type="project" value="UniProtKB-SubCell"/>
</dbReference>
<dbReference type="GO" id="GO:0005507">
    <property type="term" value="F:copper ion binding"/>
    <property type="evidence" value="ECO:0007669"/>
    <property type="project" value="InterPro"/>
</dbReference>
<dbReference type="GO" id="GO:0003677">
    <property type="term" value="F:DNA binding"/>
    <property type="evidence" value="ECO:0007669"/>
    <property type="project" value="UniProtKB-KW"/>
</dbReference>
<dbReference type="GO" id="GO:0003700">
    <property type="term" value="F:DNA-binding transcription factor activity"/>
    <property type="evidence" value="ECO:0007669"/>
    <property type="project" value="InterPro"/>
</dbReference>
<dbReference type="GO" id="GO:0045893">
    <property type="term" value="P:positive regulation of DNA-templated transcription"/>
    <property type="evidence" value="ECO:0007669"/>
    <property type="project" value="InterPro"/>
</dbReference>
<dbReference type="CDD" id="cd01108">
    <property type="entry name" value="HTH_CueR"/>
    <property type="match status" value="1"/>
</dbReference>
<dbReference type="Gene3D" id="1.10.1660.10">
    <property type="match status" value="1"/>
</dbReference>
<dbReference type="InterPro" id="IPR011789">
    <property type="entry name" value="CueR"/>
</dbReference>
<dbReference type="InterPro" id="IPR009061">
    <property type="entry name" value="DNA-bd_dom_put_sf"/>
</dbReference>
<dbReference type="InterPro" id="IPR000551">
    <property type="entry name" value="MerR-type_HTH_dom"/>
</dbReference>
<dbReference type="InterPro" id="IPR047057">
    <property type="entry name" value="MerR_fam"/>
</dbReference>
<dbReference type="InterPro" id="IPR015358">
    <property type="entry name" value="Tscrpt_reg_MerR_DNA-bd"/>
</dbReference>
<dbReference type="NCBIfam" id="TIGR02044">
    <property type="entry name" value="CueR"/>
    <property type="match status" value="1"/>
</dbReference>
<dbReference type="PANTHER" id="PTHR30204:SF94">
    <property type="entry name" value="HEAVY METAL-DEPENDENT TRANSCRIPTIONAL REGULATOR HI_0293-RELATED"/>
    <property type="match status" value="1"/>
</dbReference>
<dbReference type="PANTHER" id="PTHR30204">
    <property type="entry name" value="REDOX-CYCLING DRUG-SENSING TRANSCRIPTIONAL ACTIVATOR SOXR"/>
    <property type="match status" value="1"/>
</dbReference>
<dbReference type="Pfam" id="PF00376">
    <property type="entry name" value="MerR"/>
    <property type="match status" value="1"/>
</dbReference>
<dbReference type="Pfam" id="PF09278">
    <property type="entry name" value="MerR-DNA-bind"/>
    <property type="match status" value="1"/>
</dbReference>
<dbReference type="PRINTS" id="PR00040">
    <property type="entry name" value="HTHMERR"/>
</dbReference>
<dbReference type="SMART" id="SM00422">
    <property type="entry name" value="HTH_MERR"/>
    <property type="match status" value="1"/>
</dbReference>
<dbReference type="SUPFAM" id="SSF46955">
    <property type="entry name" value="Putative DNA-binding domain"/>
    <property type="match status" value="1"/>
</dbReference>
<dbReference type="PROSITE" id="PS00552">
    <property type="entry name" value="HTH_MERR_1"/>
    <property type="match status" value="1"/>
</dbReference>
<dbReference type="PROSITE" id="PS50937">
    <property type="entry name" value="HTH_MERR_2"/>
    <property type="match status" value="1"/>
</dbReference>
<protein>
    <recommendedName>
        <fullName>Heavy metal-dependent transcription regulator 2</fullName>
    </recommendedName>
</protein>
<sequence length="147" mass="16467">MNIGEASKTSGVSSKMIRYYEQIGLISPALRTESSYRTYGDNDVHTLRFVRRARDLGFSVEQIKELLALWRDRSRASSDVKAVALEHIAELERKIAAIQEMTRTLKHLAGHCHGDDRPDCPIIEEIANGSAQVNMEVNPRFGVAALK</sequence>
<evidence type="ECO:0000250" key="1"/>
<evidence type="ECO:0000255" key="2">
    <source>
        <dbReference type="PROSITE-ProRule" id="PRU00254"/>
    </source>
</evidence>
<evidence type="ECO:0000305" key="3"/>
<reference key="1">
    <citation type="journal article" date="2001" name="Proc. Natl. Acad. Sci. U.S.A.">
        <title>The complete sequence of the 1,683-kb pSymB megaplasmid from the N2-fixing endosymbiont Sinorhizobium meliloti.</title>
        <authorList>
            <person name="Finan T.M."/>
            <person name="Weidner S."/>
            <person name="Wong K."/>
            <person name="Buhrmester J."/>
            <person name="Chain P."/>
            <person name="Vorhoelter F.J."/>
            <person name="Hernandez-Lucas I."/>
            <person name="Becker A."/>
            <person name="Cowie A."/>
            <person name="Gouzy J."/>
            <person name="Golding B."/>
            <person name="Puehler A."/>
        </authorList>
    </citation>
    <scope>NUCLEOTIDE SEQUENCE [LARGE SCALE GENOMIC DNA]</scope>
    <source>
        <strain>1021</strain>
    </source>
</reference>
<reference key="2">
    <citation type="journal article" date="2001" name="Science">
        <title>The composite genome of the legume symbiont Sinorhizobium meliloti.</title>
        <authorList>
            <person name="Galibert F."/>
            <person name="Finan T.M."/>
            <person name="Long S.R."/>
            <person name="Puehler A."/>
            <person name="Abola P."/>
            <person name="Ampe F."/>
            <person name="Barloy-Hubler F."/>
            <person name="Barnett M.J."/>
            <person name="Becker A."/>
            <person name="Boistard P."/>
            <person name="Bothe G."/>
            <person name="Boutry M."/>
            <person name="Bowser L."/>
            <person name="Buhrmester J."/>
            <person name="Cadieu E."/>
            <person name="Capela D."/>
            <person name="Chain P."/>
            <person name="Cowie A."/>
            <person name="Davis R.W."/>
            <person name="Dreano S."/>
            <person name="Federspiel N.A."/>
            <person name="Fisher R.F."/>
            <person name="Gloux S."/>
            <person name="Godrie T."/>
            <person name="Goffeau A."/>
            <person name="Golding B."/>
            <person name="Gouzy J."/>
            <person name="Gurjal M."/>
            <person name="Hernandez-Lucas I."/>
            <person name="Hong A."/>
            <person name="Huizar L."/>
            <person name="Hyman R.W."/>
            <person name="Jones T."/>
            <person name="Kahn D."/>
            <person name="Kahn M.L."/>
            <person name="Kalman S."/>
            <person name="Keating D.H."/>
            <person name="Kiss E."/>
            <person name="Komp C."/>
            <person name="Lelaure V."/>
            <person name="Masuy D."/>
            <person name="Palm C."/>
            <person name="Peck M.C."/>
            <person name="Pohl T.M."/>
            <person name="Portetelle D."/>
            <person name="Purnelle B."/>
            <person name="Ramsperger U."/>
            <person name="Surzycki R."/>
            <person name="Thebault P."/>
            <person name="Vandenbol M."/>
            <person name="Vorhoelter F.J."/>
            <person name="Weidner S."/>
            <person name="Wells D.H."/>
            <person name="Wong K."/>
            <person name="Yeh K.-C."/>
            <person name="Batut J."/>
        </authorList>
    </citation>
    <scope>NUCLEOTIDE SEQUENCE [LARGE SCALE GENOMIC DNA]</scope>
    <source>
        <strain>1021</strain>
    </source>
</reference>
<accession>P58379</accession>
<feature type="chain" id="PRO_0000098125" description="Heavy metal-dependent transcription regulator 2">
    <location>
        <begin position="1"/>
        <end position="147"/>
    </location>
</feature>
<feature type="domain" description="HTH merR-type" evidence="2">
    <location>
        <begin position="1"/>
        <end position="69"/>
    </location>
</feature>
<feature type="DNA-binding region" description="H-T-H motif" evidence="2">
    <location>
        <begin position="3"/>
        <end position="22"/>
    </location>
</feature>